<name>LYETA_XENLA</name>
<comment type="function">
    <text evidence="1">Required for mannose-6-phosphate-dependent trafficking of lysosomal enzymes. LYSET bridges GlcNAc-1-phosphate transferase (GNPTAB), to the membrane-bound transcription factor site-1 protease (MBTPS1), thus allowing proteolytic activation of the GNPTAB. GNPTAB is involved in the regulation of M6P-dependent Golgi-to-lysosome trafficking of lysosomal enzymes. LYSET is thus an essential factor for maturation and delivery of lysosomal hydrolases.</text>
</comment>
<comment type="subcellular location">
    <subcellularLocation>
        <location evidence="1">Golgi apparatus membrane</location>
        <topology evidence="2">Multi-pass membrane protein</topology>
    </subcellularLocation>
</comment>
<comment type="similarity">
    <text evidence="3">Belongs to the LYSET family.</text>
</comment>
<gene>
    <name type="primary">lyset-a</name>
    <name type="synonym">C14orf109</name>
    <name type="synonym">tmem251-a</name>
</gene>
<accession>Q66J17</accession>
<dbReference type="EMBL" id="BC081102">
    <property type="protein sequence ID" value="AAH81102.1"/>
    <property type="molecule type" value="mRNA"/>
</dbReference>
<dbReference type="RefSeq" id="NP_001087696.1">
    <property type="nucleotide sequence ID" value="NM_001094227.1"/>
</dbReference>
<dbReference type="SMR" id="Q66J17"/>
<dbReference type="DNASU" id="447520"/>
<dbReference type="GeneID" id="447520"/>
<dbReference type="KEGG" id="xla:447520"/>
<dbReference type="AGR" id="Xenbase:XB-GENE-6078298"/>
<dbReference type="CTD" id="447520"/>
<dbReference type="Xenbase" id="XB-GENE-6078298">
    <property type="gene designation" value="lyset.L"/>
</dbReference>
<dbReference type="OrthoDB" id="6273523at2759"/>
<dbReference type="Proteomes" id="UP000186698">
    <property type="component" value="Chromosome 8L"/>
</dbReference>
<dbReference type="Bgee" id="447520">
    <property type="expression patterns" value="Expressed in blastula and 19 other cell types or tissues"/>
</dbReference>
<dbReference type="GO" id="GO:0005794">
    <property type="term" value="C:Golgi apparatus"/>
    <property type="evidence" value="ECO:0000250"/>
    <property type="project" value="UniProtKB"/>
</dbReference>
<dbReference type="GO" id="GO:0000139">
    <property type="term" value="C:Golgi membrane"/>
    <property type="evidence" value="ECO:0007669"/>
    <property type="project" value="UniProtKB-SubCell"/>
</dbReference>
<dbReference type="GO" id="GO:0007040">
    <property type="term" value="P:lysosome organization"/>
    <property type="evidence" value="ECO:0000250"/>
    <property type="project" value="UniProtKB"/>
</dbReference>
<dbReference type="GO" id="GO:0060627">
    <property type="term" value="P:regulation of vesicle-mediated transport"/>
    <property type="evidence" value="ECO:0000250"/>
    <property type="project" value="UniProtKB"/>
</dbReference>
<dbReference type="InterPro" id="IPR028024">
    <property type="entry name" value="LYSET"/>
</dbReference>
<dbReference type="PANTHER" id="PTHR31925:SF1">
    <property type="entry name" value="LYSOSOMAL ENZYME TRAFFICKING FACTOR"/>
    <property type="match status" value="1"/>
</dbReference>
<dbReference type="PANTHER" id="PTHR31925">
    <property type="entry name" value="TRANSMEMBRANE PROTEIN 251"/>
    <property type="match status" value="1"/>
</dbReference>
<dbReference type="Pfam" id="PF15190">
    <property type="entry name" value="TMEM251"/>
    <property type="match status" value="1"/>
</dbReference>
<proteinExistence type="evidence at transcript level"/>
<protein>
    <recommendedName>
        <fullName>Lysosomal enzyme trafficking factor</fullName>
    </recommendedName>
    <alternativeName>
        <fullName>Transmembrane protein 251</fullName>
    </alternativeName>
    <alternativeName>
        <fullName>Transmembrane protein 251-A</fullName>
    </alternativeName>
</protein>
<keyword id="KW-0333">Golgi apparatus</keyword>
<keyword id="KW-0472">Membrane</keyword>
<keyword id="KW-1185">Reference proteome</keyword>
<keyword id="KW-0812">Transmembrane</keyword>
<keyword id="KW-1133">Transmembrane helix</keyword>
<organism>
    <name type="scientific">Xenopus laevis</name>
    <name type="common">African clawed frog</name>
    <dbReference type="NCBI Taxonomy" id="8355"/>
    <lineage>
        <taxon>Eukaryota</taxon>
        <taxon>Metazoa</taxon>
        <taxon>Chordata</taxon>
        <taxon>Craniata</taxon>
        <taxon>Vertebrata</taxon>
        <taxon>Euteleostomi</taxon>
        <taxon>Amphibia</taxon>
        <taxon>Batrachia</taxon>
        <taxon>Anura</taxon>
        <taxon>Pipoidea</taxon>
        <taxon>Pipidae</taxon>
        <taxon>Xenopodinae</taxon>
        <taxon>Xenopus</taxon>
        <taxon>Xenopus</taxon>
    </lineage>
</organism>
<sequence length="131" mass="15399">MMNFRQRMGWIGVSLYLFVSAAAFYYVFEINDTYNKLALEHVQLKPQEPHRGTTWTHSLKARLLSLPFWLWATLFLIPYFQVFLFLYSCTRADPKTVGYCIIPICLAIICNRHQSFVRASNQISRLQLIDT</sequence>
<evidence type="ECO:0000250" key="1">
    <source>
        <dbReference type="UniProtKB" id="Q8N6I4"/>
    </source>
</evidence>
<evidence type="ECO:0000255" key="2"/>
<evidence type="ECO:0000305" key="3"/>
<reference key="1">
    <citation type="submission" date="2004-08" db="EMBL/GenBank/DDBJ databases">
        <authorList>
            <consortium name="NIH - Xenopus Gene Collection (XGC) project"/>
        </authorList>
    </citation>
    <scope>NUCLEOTIDE SEQUENCE [LARGE SCALE MRNA]</scope>
    <source>
        <tissue>Embryo</tissue>
    </source>
</reference>
<feature type="chain" id="PRO_0000359886" description="Lysosomal enzyme trafficking factor">
    <location>
        <begin position="1"/>
        <end position="131"/>
    </location>
</feature>
<feature type="transmembrane region" description="Helical" evidence="2">
    <location>
        <begin position="8"/>
        <end position="28"/>
    </location>
</feature>
<feature type="transmembrane region" description="Helical" evidence="2">
    <location>
        <begin position="66"/>
        <end position="86"/>
    </location>
</feature>